<gene>
    <name type="ordered locus">BALH_2270</name>
</gene>
<dbReference type="EMBL" id="CP000485">
    <property type="protein sequence ID" value="ABK85569.1"/>
    <property type="molecule type" value="Genomic_DNA"/>
</dbReference>
<dbReference type="RefSeq" id="WP_000900627.1">
    <property type="nucleotide sequence ID" value="NC_008600.1"/>
</dbReference>
<dbReference type="KEGG" id="btl:BALH_2270"/>
<dbReference type="HOGENOM" id="CLU_174851_1_0_9"/>
<dbReference type="InterPro" id="IPR055365">
    <property type="entry name" value="PH_SunI-like"/>
</dbReference>
<dbReference type="Pfam" id="PF23491">
    <property type="entry name" value="bPH_8"/>
    <property type="match status" value="1"/>
</dbReference>
<sequence length="84" mass="9334">MLGIHVKKTKEELIISWQLAKITIPLRDVIEVTEDATYAGVEDTSAIRIGTAYGTTDRILIKTVKQNYVLFTTNKVSILNAINA</sequence>
<comment type="similarity">
    <text evidence="1">Belongs to the UPF0457 family.</text>
</comment>
<name>Y2270_BACAH</name>
<proteinExistence type="inferred from homology"/>
<accession>A0REC6</accession>
<evidence type="ECO:0000305" key="1"/>
<reference key="1">
    <citation type="journal article" date="2007" name="J. Bacteriol.">
        <title>The complete genome sequence of Bacillus thuringiensis Al Hakam.</title>
        <authorList>
            <person name="Challacombe J.F."/>
            <person name="Altherr M.R."/>
            <person name="Xie G."/>
            <person name="Bhotika S.S."/>
            <person name="Brown N."/>
            <person name="Bruce D."/>
            <person name="Campbell C.S."/>
            <person name="Campbell M.L."/>
            <person name="Chen J."/>
            <person name="Chertkov O."/>
            <person name="Cleland C."/>
            <person name="Dimitrijevic M."/>
            <person name="Doggett N.A."/>
            <person name="Fawcett J.J."/>
            <person name="Glavina T."/>
            <person name="Goodwin L.A."/>
            <person name="Green L.D."/>
            <person name="Han C.S."/>
            <person name="Hill K.K."/>
            <person name="Hitchcock P."/>
            <person name="Jackson P.J."/>
            <person name="Keim P."/>
            <person name="Kewalramani A.R."/>
            <person name="Longmire J."/>
            <person name="Lucas S."/>
            <person name="Malfatti S."/>
            <person name="Martinez D."/>
            <person name="McMurry K."/>
            <person name="Meincke L.J."/>
            <person name="Misra M."/>
            <person name="Moseman B.L."/>
            <person name="Mundt M."/>
            <person name="Munk A.C."/>
            <person name="Okinaka R.T."/>
            <person name="Parson-Quintana B."/>
            <person name="Reilly L.P."/>
            <person name="Richardson P."/>
            <person name="Robinson D.L."/>
            <person name="Saunders E."/>
            <person name="Tapia R."/>
            <person name="Tesmer J.G."/>
            <person name="Thayer N."/>
            <person name="Thompson L.S."/>
            <person name="Tice H."/>
            <person name="Ticknor L.O."/>
            <person name="Wills P.L."/>
            <person name="Gilna P."/>
            <person name="Brettin T.S."/>
        </authorList>
    </citation>
    <scope>NUCLEOTIDE SEQUENCE [LARGE SCALE GENOMIC DNA]</scope>
    <source>
        <strain>Al Hakam</strain>
    </source>
</reference>
<organism>
    <name type="scientific">Bacillus thuringiensis (strain Al Hakam)</name>
    <dbReference type="NCBI Taxonomy" id="412694"/>
    <lineage>
        <taxon>Bacteria</taxon>
        <taxon>Bacillati</taxon>
        <taxon>Bacillota</taxon>
        <taxon>Bacilli</taxon>
        <taxon>Bacillales</taxon>
        <taxon>Bacillaceae</taxon>
        <taxon>Bacillus</taxon>
        <taxon>Bacillus cereus group</taxon>
    </lineage>
</organism>
<feature type="chain" id="PRO_0000294493" description="UPF0457 protein BALH_2270">
    <location>
        <begin position="1"/>
        <end position="84"/>
    </location>
</feature>
<protein>
    <recommendedName>
        <fullName>UPF0457 protein BALH_2270</fullName>
    </recommendedName>
</protein>